<organism>
    <name type="scientific">Syntrophus aciditrophicus (strain SB)</name>
    <dbReference type="NCBI Taxonomy" id="56780"/>
    <lineage>
        <taxon>Bacteria</taxon>
        <taxon>Pseudomonadati</taxon>
        <taxon>Thermodesulfobacteriota</taxon>
        <taxon>Syntrophia</taxon>
        <taxon>Syntrophales</taxon>
        <taxon>Syntrophaceae</taxon>
        <taxon>Syntrophus</taxon>
    </lineage>
</organism>
<gene>
    <name evidence="1" type="primary">ruvA</name>
    <name type="ordered locus">SYNAS_07410</name>
    <name type="ORF">SYN_02972</name>
</gene>
<proteinExistence type="inferred from homology"/>
<dbReference type="EMBL" id="CP000252">
    <property type="protein sequence ID" value="ABC76620.1"/>
    <property type="molecule type" value="Genomic_DNA"/>
</dbReference>
<dbReference type="RefSeq" id="WP_011416654.1">
    <property type="nucleotide sequence ID" value="NC_007759.1"/>
</dbReference>
<dbReference type="SMR" id="Q2LRA9"/>
<dbReference type="FunCoup" id="Q2LRA9">
    <property type="interactions" value="246"/>
</dbReference>
<dbReference type="STRING" id="56780.SYN_02972"/>
<dbReference type="KEGG" id="sat:SYN_02972"/>
<dbReference type="eggNOG" id="COG0632">
    <property type="taxonomic scope" value="Bacteria"/>
</dbReference>
<dbReference type="HOGENOM" id="CLU_087936_0_0_7"/>
<dbReference type="InParanoid" id="Q2LRA9"/>
<dbReference type="OrthoDB" id="5293449at2"/>
<dbReference type="Proteomes" id="UP000001933">
    <property type="component" value="Chromosome"/>
</dbReference>
<dbReference type="GO" id="GO:0005737">
    <property type="term" value="C:cytoplasm"/>
    <property type="evidence" value="ECO:0007669"/>
    <property type="project" value="UniProtKB-SubCell"/>
</dbReference>
<dbReference type="GO" id="GO:0009379">
    <property type="term" value="C:Holliday junction helicase complex"/>
    <property type="evidence" value="ECO:0007669"/>
    <property type="project" value="InterPro"/>
</dbReference>
<dbReference type="GO" id="GO:0048476">
    <property type="term" value="C:Holliday junction resolvase complex"/>
    <property type="evidence" value="ECO:0007669"/>
    <property type="project" value="UniProtKB-UniRule"/>
</dbReference>
<dbReference type="GO" id="GO:0005524">
    <property type="term" value="F:ATP binding"/>
    <property type="evidence" value="ECO:0007669"/>
    <property type="project" value="InterPro"/>
</dbReference>
<dbReference type="GO" id="GO:0000400">
    <property type="term" value="F:four-way junction DNA binding"/>
    <property type="evidence" value="ECO:0007669"/>
    <property type="project" value="UniProtKB-UniRule"/>
</dbReference>
<dbReference type="GO" id="GO:0009378">
    <property type="term" value="F:four-way junction helicase activity"/>
    <property type="evidence" value="ECO:0007669"/>
    <property type="project" value="InterPro"/>
</dbReference>
<dbReference type="GO" id="GO:0006310">
    <property type="term" value="P:DNA recombination"/>
    <property type="evidence" value="ECO:0007669"/>
    <property type="project" value="UniProtKB-UniRule"/>
</dbReference>
<dbReference type="GO" id="GO:0006281">
    <property type="term" value="P:DNA repair"/>
    <property type="evidence" value="ECO:0007669"/>
    <property type="project" value="UniProtKB-UniRule"/>
</dbReference>
<dbReference type="CDD" id="cd14332">
    <property type="entry name" value="UBA_RuvA_C"/>
    <property type="match status" value="1"/>
</dbReference>
<dbReference type="Gene3D" id="1.10.150.20">
    <property type="entry name" value="5' to 3' exonuclease, C-terminal subdomain"/>
    <property type="match status" value="1"/>
</dbReference>
<dbReference type="Gene3D" id="1.10.8.10">
    <property type="entry name" value="DNA helicase RuvA subunit, C-terminal domain"/>
    <property type="match status" value="1"/>
</dbReference>
<dbReference type="Gene3D" id="2.40.50.140">
    <property type="entry name" value="Nucleic acid-binding proteins"/>
    <property type="match status" value="1"/>
</dbReference>
<dbReference type="HAMAP" id="MF_00031">
    <property type="entry name" value="DNA_HJ_migration_RuvA"/>
    <property type="match status" value="1"/>
</dbReference>
<dbReference type="InterPro" id="IPR013849">
    <property type="entry name" value="DNA_helicase_Holl-junc_RuvA_I"/>
</dbReference>
<dbReference type="InterPro" id="IPR003583">
    <property type="entry name" value="Hlx-hairpin-Hlx_DNA-bd_motif"/>
</dbReference>
<dbReference type="InterPro" id="IPR012340">
    <property type="entry name" value="NA-bd_OB-fold"/>
</dbReference>
<dbReference type="InterPro" id="IPR000085">
    <property type="entry name" value="RuvA"/>
</dbReference>
<dbReference type="InterPro" id="IPR010994">
    <property type="entry name" value="RuvA_2-like"/>
</dbReference>
<dbReference type="InterPro" id="IPR011114">
    <property type="entry name" value="RuvA_C"/>
</dbReference>
<dbReference type="InterPro" id="IPR036267">
    <property type="entry name" value="RuvA_C_sf"/>
</dbReference>
<dbReference type="NCBIfam" id="TIGR00084">
    <property type="entry name" value="ruvA"/>
    <property type="match status" value="1"/>
</dbReference>
<dbReference type="Pfam" id="PF14520">
    <property type="entry name" value="HHH_5"/>
    <property type="match status" value="1"/>
</dbReference>
<dbReference type="Pfam" id="PF07499">
    <property type="entry name" value="RuvA_C"/>
    <property type="match status" value="1"/>
</dbReference>
<dbReference type="Pfam" id="PF01330">
    <property type="entry name" value="RuvA_N"/>
    <property type="match status" value="1"/>
</dbReference>
<dbReference type="SMART" id="SM00278">
    <property type="entry name" value="HhH1"/>
    <property type="match status" value="2"/>
</dbReference>
<dbReference type="SUPFAM" id="SSF46929">
    <property type="entry name" value="DNA helicase RuvA subunit, C-terminal domain"/>
    <property type="match status" value="1"/>
</dbReference>
<dbReference type="SUPFAM" id="SSF50249">
    <property type="entry name" value="Nucleic acid-binding proteins"/>
    <property type="match status" value="1"/>
</dbReference>
<dbReference type="SUPFAM" id="SSF47781">
    <property type="entry name" value="RuvA domain 2-like"/>
    <property type="match status" value="1"/>
</dbReference>
<reference key="1">
    <citation type="journal article" date="2007" name="Proc. Natl. Acad. Sci. U.S.A.">
        <title>The genome of Syntrophus aciditrophicus: life at the thermodynamic limit of microbial growth.</title>
        <authorList>
            <person name="McInerney M.J."/>
            <person name="Rohlin L."/>
            <person name="Mouttaki H."/>
            <person name="Kim U."/>
            <person name="Krupp R.S."/>
            <person name="Rios-Hernandez L."/>
            <person name="Sieber J."/>
            <person name="Struchtemeyer C.G."/>
            <person name="Bhattacharyya A."/>
            <person name="Campbell J.W."/>
            <person name="Gunsalus R.P."/>
        </authorList>
    </citation>
    <scope>NUCLEOTIDE SEQUENCE [LARGE SCALE GENOMIC DNA]</scope>
    <source>
        <strain>SB</strain>
    </source>
</reference>
<name>RUVA_SYNAS</name>
<evidence type="ECO:0000255" key="1">
    <source>
        <dbReference type="HAMAP-Rule" id="MF_00031"/>
    </source>
</evidence>
<accession>Q2LRA9</accession>
<comment type="function">
    <text evidence="1">The RuvA-RuvB-RuvC complex processes Holliday junction (HJ) DNA during genetic recombination and DNA repair, while the RuvA-RuvB complex plays an important role in the rescue of blocked DNA replication forks via replication fork reversal (RFR). RuvA specifically binds to HJ cruciform DNA, conferring on it an open structure. The RuvB hexamer acts as an ATP-dependent pump, pulling dsDNA into and through the RuvAB complex. HJ branch migration allows RuvC to scan DNA until it finds its consensus sequence, where it cleaves and resolves the cruciform DNA.</text>
</comment>
<comment type="subunit">
    <text evidence="1">Homotetramer. Forms an RuvA(8)-RuvB(12)-Holliday junction (HJ) complex. HJ DNA is sandwiched between 2 RuvA tetramers; dsDNA enters through RuvA and exits via RuvB. An RuvB hexamer assembles on each DNA strand where it exits the tetramer. Each RuvB hexamer is contacted by two RuvA subunits (via domain III) on 2 adjacent RuvB subunits; this complex drives branch migration. In the full resolvosome a probable DNA-RuvA(4)-RuvB(12)-RuvC(2) complex forms which resolves the HJ.</text>
</comment>
<comment type="subcellular location">
    <subcellularLocation>
        <location evidence="1">Cytoplasm</location>
    </subcellularLocation>
</comment>
<comment type="domain">
    <text evidence="1">Has three domains with a flexible linker between the domains II and III and assumes an 'L' shape. Domain III is highly mobile and contacts RuvB.</text>
</comment>
<comment type="similarity">
    <text evidence="1">Belongs to the RuvA family.</text>
</comment>
<protein>
    <recommendedName>
        <fullName evidence="1">Holliday junction branch migration complex subunit RuvA</fullName>
    </recommendedName>
</protein>
<feature type="chain" id="PRO_1000002577" description="Holliday junction branch migration complex subunit RuvA">
    <location>
        <begin position="1"/>
        <end position="204"/>
    </location>
</feature>
<feature type="region of interest" description="Domain I" evidence="1">
    <location>
        <begin position="1"/>
        <end position="64"/>
    </location>
</feature>
<feature type="region of interest" description="Domain II" evidence="1">
    <location>
        <begin position="65"/>
        <end position="143"/>
    </location>
</feature>
<feature type="region of interest" description="Flexible linker" evidence="1">
    <location>
        <begin position="144"/>
        <end position="154"/>
    </location>
</feature>
<feature type="region of interest" description="Domain III" evidence="1">
    <location>
        <begin position="154"/>
        <end position="204"/>
    </location>
</feature>
<keyword id="KW-0963">Cytoplasm</keyword>
<keyword id="KW-0227">DNA damage</keyword>
<keyword id="KW-0233">DNA recombination</keyword>
<keyword id="KW-0234">DNA repair</keyword>
<keyword id="KW-0238">DNA-binding</keyword>
<keyword id="KW-1185">Reference proteome</keyword>
<sequence>MIAQIRGKLILKTVSMVIIDNHGIGYEVMIPLSTYYELPDVGSEVSLFVYTFFKQDSILLVGFCTENEKQLFKLMISVSGIGPRLAVNVLSGINSSELIHAIANNDLNRLLKVPGLGRKMAQRVILELRDKVSGWTSKEQITFINNKKDAIDQSVMEEDAISALINLGYKSQAAKDAIDRVISEGGENKSLDVILKKALKVLAM</sequence>